<keyword id="KW-1185">Reference proteome</keyword>
<reference key="1">
    <citation type="journal article" date="2004" name="Science">
        <title>The 1.2-megabase genome sequence of Mimivirus.</title>
        <authorList>
            <person name="Raoult D."/>
            <person name="Audic S."/>
            <person name="Robert C."/>
            <person name="Abergel C."/>
            <person name="Renesto P."/>
            <person name="Ogata H."/>
            <person name="La Scola B."/>
            <person name="Susan M."/>
            <person name="Claverie J.-M."/>
        </authorList>
    </citation>
    <scope>NUCLEOTIDE SEQUENCE [LARGE SCALE GENOMIC DNA]</scope>
    <source>
        <strain>Rowbotham-Bradford</strain>
    </source>
</reference>
<proteinExistence type="predicted"/>
<dbReference type="EMBL" id="AY653733">
    <property type="protein sequence ID" value="AAV50768.1"/>
    <property type="molecule type" value="Genomic_DNA"/>
</dbReference>
<dbReference type="KEGG" id="vg:9925135"/>
<dbReference type="OrthoDB" id="12188at10239"/>
<dbReference type="Proteomes" id="UP000001134">
    <property type="component" value="Genome"/>
</dbReference>
<accession>Q5UQ69</accession>
<organism>
    <name type="scientific">Acanthamoeba polyphaga mimivirus</name>
    <name type="common">APMV</name>
    <dbReference type="NCBI Taxonomy" id="212035"/>
    <lineage>
        <taxon>Viruses</taxon>
        <taxon>Varidnaviria</taxon>
        <taxon>Bamfordvirae</taxon>
        <taxon>Nucleocytoviricota</taxon>
        <taxon>Megaviricetes</taxon>
        <taxon>Imitervirales</taxon>
        <taxon>Mimiviridae</taxon>
        <taxon>Megamimivirinae</taxon>
        <taxon>Mimivirus</taxon>
        <taxon>Mimivirus bradfordmassiliense</taxon>
    </lineage>
</organism>
<name>YL504_MIMIV</name>
<gene>
    <name type="ordered locus">MIMI_L504</name>
</gene>
<sequence>MDSKCQSIRSKTQPNLRCLFNAKNGNKYCPLHLIQNNIIDFNPKNEEFFSTVTDNNNEHLQNTINPIYKQISLDTINSIGIKTFVTKDLNKKDNGKDKTTGIKKKIKNSKSVSSKMLHEQKVTTIADSYQNTEDDLEMKLLILINNEENLEKISKLIGPAFNDLTLAEDNEDPVTYDQFWTVENGIKKPSGINRYFIFSYIDSNDKIRCFTIMSINDLISHNNLEHPITMEKIPEEDILRAIELIDFYKKEIGLFNSSNMEISREFQIKHKLSNLFKKFHVHSIYLEENWLLDITNLSNLDKIIHETNKLISNNLVSINPNLKTFDLFKKKFTVNSSKNKKILETDSNTTKETYIDAQWYIVEQWEKLIELADNTNNQIPIWVLILGLSYVVPEIKQKFPDLEIML</sequence>
<protein>
    <recommendedName>
        <fullName>Uncharacterized protein L504</fullName>
    </recommendedName>
</protein>
<feature type="chain" id="PRO_0000247285" description="Uncharacterized protein L504">
    <location>
        <begin position="1"/>
        <end position="406"/>
    </location>
</feature>
<organismHost>
    <name type="scientific">Acanthamoeba polyphaga</name>
    <name type="common">Amoeba</name>
    <dbReference type="NCBI Taxonomy" id="5757"/>
</organismHost>